<feature type="chain" id="PRO_0000082934" description="Methionyl-tRNA formyltransferase">
    <location>
        <begin position="1"/>
        <end position="314"/>
    </location>
</feature>
<feature type="binding site" evidence="1">
    <location>
        <begin position="112"/>
        <end position="115"/>
    </location>
    <ligand>
        <name>(6S)-5,6,7,8-tetrahydrofolate</name>
        <dbReference type="ChEBI" id="CHEBI:57453"/>
    </ligand>
</feature>
<proteinExistence type="inferred from homology"/>
<sequence length="314" mass="35831">MKKLTIIFAGTAYFSMRYLDALTKSEHKVIAVITQPDRPSGRGQKIIFSPVKILSIKRNIPIFQPSELKNEKIQREIFNLNADMMIVVSYGKLIPKEILTMFPKGCINVHTSLLPRWRGATPIQSAILFGDKETGISIIKMNEKMDAGTIINSVKCNILPNDTTETLTFKLIEIGIQVLLKTLYYINKNIVVEKEQNEKHATFSKKISKKDALLNWNTEAYLLERLIRAFNPWPVCYFIVNQIAIRVWQAKIIPTVMKSACVGEIVAFNKNGIQINTAHQILNLQKIQFPGKKIINVEKIISSKKHWFHIGKII</sequence>
<organism>
    <name type="scientific">Buchnera aphidicola subsp. Schizaphis graminum (strain Sg)</name>
    <dbReference type="NCBI Taxonomy" id="198804"/>
    <lineage>
        <taxon>Bacteria</taxon>
        <taxon>Pseudomonadati</taxon>
        <taxon>Pseudomonadota</taxon>
        <taxon>Gammaproteobacteria</taxon>
        <taxon>Enterobacterales</taxon>
        <taxon>Erwiniaceae</taxon>
        <taxon>Buchnera</taxon>
    </lineage>
</organism>
<name>FMT_BUCAP</name>
<comment type="function">
    <text evidence="1">Attaches a formyl group to the free amino group of methionyl-tRNA(fMet). The formyl group appears to play a dual role in the initiator identity of N-formylmethionyl-tRNA by promoting its recognition by IF2 and preventing the misappropriation of this tRNA by the elongation apparatus.</text>
</comment>
<comment type="catalytic activity">
    <reaction evidence="1">
        <text>L-methionyl-tRNA(fMet) + (6R)-10-formyltetrahydrofolate = N-formyl-L-methionyl-tRNA(fMet) + (6S)-5,6,7,8-tetrahydrofolate + H(+)</text>
        <dbReference type="Rhea" id="RHEA:24380"/>
        <dbReference type="Rhea" id="RHEA-COMP:9952"/>
        <dbReference type="Rhea" id="RHEA-COMP:9953"/>
        <dbReference type="ChEBI" id="CHEBI:15378"/>
        <dbReference type="ChEBI" id="CHEBI:57453"/>
        <dbReference type="ChEBI" id="CHEBI:78530"/>
        <dbReference type="ChEBI" id="CHEBI:78844"/>
        <dbReference type="ChEBI" id="CHEBI:195366"/>
        <dbReference type="EC" id="2.1.2.9"/>
    </reaction>
</comment>
<comment type="similarity">
    <text evidence="1">Belongs to the Fmt family.</text>
</comment>
<dbReference type="EC" id="2.1.2.9" evidence="1"/>
<dbReference type="EMBL" id="AE013218">
    <property type="protein sequence ID" value="AAM68021.1"/>
    <property type="molecule type" value="Genomic_DNA"/>
</dbReference>
<dbReference type="RefSeq" id="WP_011053987.1">
    <property type="nucleotide sequence ID" value="NC_004061.1"/>
</dbReference>
<dbReference type="SMR" id="Q8K974"/>
<dbReference type="STRING" id="198804.BUsg_478"/>
<dbReference type="GeneID" id="93003953"/>
<dbReference type="KEGG" id="bas:BUsg_478"/>
<dbReference type="eggNOG" id="COG0223">
    <property type="taxonomic scope" value="Bacteria"/>
</dbReference>
<dbReference type="HOGENOM" id="CLU_033347_1_2_6"/>
<dbReference type="Proteomes" id="UP000000416">
    <property type="component" value="Chromosome"/>
</dbReference>
<dbReference type="GO" id="GO:0005829">
    <property type="term" value="C:cytosol"/>
    <property type="evidence" value="ECO:0007669"/>
    <property type="project" value="TreeGrafter"/>
</dbReference>
<dbReference type="GO" id="GO:0004479">
    <property type="term" value="F:methionyl-tRNA formyltransferase activity"/>
    <property type="evidence" value="ECO:0007669"/>
    <property type="project" value="UniProtKB-UniRule"/>
</dbReference>
<dbReference type="CDD" id="cd08646">
    <property type="entry name" value="FMT_core_Met-tRNA-FMT_N"/>
    <property type="match status" value="1"/>
</dbReference>
<dbReference type="CDD" id="cd08704">
    <property type="entry name" value="Met_tRNA_FMT_C"/>
    <property type="match status" value="1"/>
</dbReference>
<dbReference type="Gene3D" id="3.10.25.10">
    <property type="entry name" value="Formyl transferase, C-terminal domain"/>
    <property type="match status" value="1"/>
</dbReference>
<dbReference type="Gene3D" id="3.40.50.170">
    <property type="entry name" value="Formyl transferase, N-terminal domain"/>
    <property type="match status" value="1"/>
</dbReference>
<dbReference type="HAMAP" id="MF_00182">
    <property type="entry name" value="Formyl_trans"/>
    <property type="match status" value="1"/>
</dbReference>
<dbReference type="InterPro" id="IPR005794">
    <property type="entry name" value="Fmt"/>
</dbReference>
<dbReference type="InterPro" id="IPR005793">
    <property type="entry name" value="Formyl_trans_C"/>
</dbReference>
<dbReference type="InterPro" id="IPR037022">
    <property type="entry name" value="Formyl_trans_C_sf"/>
</dbReference>
<dbReference type="InterPro" id="IPR002376">
    <property type="entry name" value="Formyl_transf_N"/>
</dbReference>
<dbReference type="InterPro" id="IPR036477">
    <property type="entry name" value="Formyl_transf_N_sf"/>
</dbReference>
<dbReference type="InterPro" id="IPR011034">
    <property type="entry name" value="Formyl_transferase-like_C_sf"/>
</dbReference>
<dbReference type="InterPro" id="IPR001555">
    <property type="entry name" value="GART_AS"/>
</dbReference>
<dbReference type="InterPro" id="IPR044135">
    <property type="entry name" value="Met-tRNA-FMT_C"/>
</dbReference>
<dbReference type="InterPro" id="IPR041711">
    <property type="entry name" value="Met-tRNA-FMT_N"/>
</dbReference>
<dbReference type="NCBIfam" id="TIGR00460">
    <property type="entry name" value="fmt"/>
    <property type="match status" value="1"/>
</dbReference>
<dbReference type="PANTHER" id="PTHR11138">
    <property type="entry name" value="METHIONYL-TRNA FORMYLTRANSFERASE"/>
    <property type="match status" value="1"/>
</dbReference>
<dbReference type="PANTHER" id="PTHR11138:SF5">
    <property type="entry name" value="METHIONYL-TRNA FORMYLTRANSFERASE, MITOCHONDRIAL"/>
    <property type="match status" value="1"/>
</dbReference>
<dbReference type="Pfam" id="PF02911">
    <property type="entry name" value="Formyl_trans_C"/>
    <property type="match status" value="1"/>
</dbReference>
<dbReference type="Pfam" id="PF00551">
    <property type="entry name" value="Formyl_trans_N"/>
    <property type="match status" value="1"/>
</dbReference>
<dbReference type="SUPFAM" id="SSF50486">
    <property type="entry name" value="FMT C-terminal domain-like"/>
    <property type="match status" value="1"/>
</dbReference>
<dbReference type="SUPFAM" id="SSF53328">
    <property type="entry name" value="Formyltransferase"/>
    <property type="match status" value="1"/>
</dbReference>
<dbReference type="PROSITE" id="PS00373">
    <property type="entry name" value="GART"/>
    <property type="match status" value="1"/>
</dbReference>
<evidence type="ECO:0000255" key="1">
    <source>
        <dbReference type="HAMAP-Rule" id="MF_00182"/>
    </source>
</evidence>
<keyword id="KW-0648">Protein biosynthesis</keyword>
<keyword id="KW-0808">Transferase</keyword>
<accession>Q8K974</accession>
<reference key="1">
    <citation type="journal article" date="2002" name="Science">
        <title>50 million years of genomic stasis in endosymbiotic bacteria.</title>
        <authorList>
            <person name="Tamas I."/>
            <person name="Klasson L."/>
            <person name="Canbaeck B."/>
            <person name="Naeslund A.K."/>
            <person name="Eriksson A.-S."/>
            <person name="Wernegreen J.J."/>
            <person name="Sandstroem J.P."/>
            <person name="Moran N.A."/>
            <person name="Andersson S.G.E."/>
        </authorList>
    </citation>
    <scope>NUCLEOTIDE SEQUENCE [LARGE SCALE GENOMIC DNA]</scope>
    <source>
        <strain>Sg</strain>
    </source>
</reference>
<gene>
    <name evidence="1" type="primary">fmt</name>
    <name type="ordered locus">BUsg_478</name>
</gene>
<protein>
    <recommendedName>
        <fullName evidence="1">Methionyl-tRNA formyltransferase</fullName>
        <ecNumber evidence="1">2.1.2.9</ecNumber>
    </recommendedName>
</protein>